<keyword id="KW-0342">GTP-binding</keyword>
<keyword id="KW-0378">Hydrolase</keyword>
<keyword id="KW-0479">Metal-binding</keyword>
<keyword id="KW-0547">Nucleotide-binding</keyword>
<keyword id="KW-0554">One-carbon metabolism</keyword>
<keyword id="KW-0862">Zinc</keyword>
<sequence length="184" mass="20474">MSDDLTQHYSQILSILGEDTQRGGLVDTPKRAAKAMQFLTDGYEKNLNDVVNGAIFEADTDEMVVIQNIEYYSLCEHHILPFIGQCHIAYLPQGKVLGLSKFARIVDMYARRLQIQEGLTKQIADAIQEVTGAAGVGVIMEGKHMCMMMRGVQKQNSSMVTSVMLGAMRKSDATRNEFLRLIGK</sequence>
<comment type="catalytic activity">
    <reaction evidence="2">
        <text>GTP + H2O = 7,8-dihydroneopterin 3'-triphosphate + formate + H(+)</text>
        <dbReference type="Rhea" id="RHEA:17473"/>
        <dbReference type="ChEBI" id="CHEBI:15377"/>
        <dbReference type="ChEBI" id="CHEBI:15378"/>
        <dbReference type="ChEBI" id="CHEBI:15740"/>
        <dbReference type="ChEBI" id="CHEBI:37565"/>
        <dbReference type="ChEBI" id="CHEBI:58462"/>
        <dbReference type="EC" id="3.5.4.16"/>
    </reaction>
</comment>
<comment type="pathway">
    <text evidence="2">Cofactor biosynthesis; 7,8-dihydroneopterin triphosphate biosynthesis; 7,8-dihydroneopterin triphosphate from GTP: step 1/1.</text>
</comment>
<comment type="subunit">
    <text evidence="1">Toroid-shaped homodecamer, composed of two pentamers of five dimers.</text>
</comment>
<comment type="similarity">
    <text evidence="2">Belongs to the GTP cyclohydrolase I family.</text>
</comment>
<proteinExistence type="inferred from homology"/>
<organism>
    <name type="scientific">Pseudoalteromonas atlantica (strain T6c / ATCC BAA-1087)</name>
    <dbReference type="NCBI Taxonomy" id="3042615"/>
    <lineage>
        <taxon>Bacteria</taxon>
        <taxon>Pseudomonadati</taxon>
        <taxon>Pseudomonadota</taxon>
        <taxon>Gammaproteobacteria</taxon>
        <taxon>Alteromonadales</taxon>
        <taxon>Alteromonadaceae</taxon>
        <taxon>Paraglaciecola</taxon>
    </lineage>
</organism>
<reference key="1">
    <citation type="submission" date="2006-06" db="EMBL/GenBank/DDBJ databases">
        <title>Complete sequence of Pseudoalteromonas atlantica T6c.</title>
        <authorList>
            <consortium name="US DOE Joint Genome Institute"/>
            <person name="Copeland A."/>
            <person name="Lucas S."/>
            <person name="Lapidus A."/>
            <person name="Barry K."/>
            <person name="Detter J.C."/>
            <person name="Glavina del Rio T."/>
            <person name="Hammon N."/>
            <person name="Israni S."/>
            <person name="Dalin E."/>
            <person name="Tice H."/>
            <person name="Pitluck S."/>
            <person name="Saunders E."/>
            <person name="Brettin T."/>
            <person name="Bruce D."/>
            <person name="Han C."/>
            <person name="Tapia R."/>
            <person name="Gilna P."/>
            <person name="Schmutz J."/>
            <person name="Larimer F."/>
            <person name="Land M."/>
            <person name="Hauser L."/>
            <person name="Kyrpides N."/>
            <person name="Kim E."/>
            <person name="Karls A.C."/>
            <person name="Bartlett D."/>
            <person name="Higgins B.P."/>
            <person name="Richardson P."/>
        </authorList>
    </citation>
    <scope>NUCLEOTIDE SEQUENCE [LARGE SCALE GENOMIC DNA]</scope>
    <source>
        <strain>T6c / ATCC BAA-1087</strain>
    </source>
</reference>
<protein>
    <recommendedName>
        <fullName evidence="2">GTP cyclohydrolase 1</fullName>
        <ecNumber evidence="2">3.5.4.16</ecNumber>
    </recommendedName>
    <alternativeName>
        <fullName evidence="2">GTP cyclohydrolase I</fullName>
        <shortName evidence="2">GTP-CH-I</shortName>
    </alternativeName>
</protein>
<evidence type="ECO:0000250" key="1"/>
<evidence type="ECO:0000255" key="2">
    <source>
        <dbReference type="HAMAP-Rule" id="MF_00223"/>
    </source>
</evidence>
<name>GCH1_PSEA6</name>
<gene>
    <name evidence="2" type="primary">folE</name>
    <name type="ordered locus">Patl_0548</name>
</gene>
<dbReference type="EC" id="3.5.4.16" evidence="2"/>
<dbReference type="EMBL" id="CP000388">
    <property type="protein sequence ID" value="ABG39077.1"/>
    <property type="molecule type" value="Genomic_DNA"/>
</dbReference>
<dbReference type="RefSeq" id="WP_011573457.1">
    <property type="nucleotide sequence ID" value="NC_008228.1"/>
</dbReference>
<dbReference type="SMR" id="Q15YG1"/>
<dbReference type="STRING" id="342610.Patl_0548"/>
<dbReference type="KEGG" id="pat:Patl_0548"/>
<dbReference type="eggNOG" id="COG0302">
    <property type="taxonomic scope" value="Bacteria"/>
</dbReference>
<dbReference type="HOGENOM" id="CLU_049768_3_4_6"/>
<dbReference type="OrthoDB" id="9801207at2"/>
<dbReference type="UniPathway" id="UPA00848">
    <property type="reaction ID" value="UER00151"/>
</dbReference>
<dbReference type="Proteomes" id="UP000001981">
    <property type="component" value="Chromosome"/>
</dbReference>
<dbReference type="GO" id="GO:0005737">
    <property type="term" value="C:cytoplasm"/>
    <property type="evidence" value="ECO:0007669"/>
    <property type="project" value="TreeGrafter"/>
</dbReference>
<dbReference type="GO" id="GO:0005525">
    <property type="term" value="F:GTP binding"/>
    <property type="evidence" value="ECO:0007669"/>
    <property type="project" value="UniProtKB-KW"/>
</dbReference>
<dbReference type="GO" id="GO:0003934">
    <property type="term" value="F:GTP cyclohydrolase I activity"/>
    <property type="evidence" value="ECO:0007669"/>
    <property type="project" value="UniProtKB-UniRule"/>
</dbReference>
<dbReference type="GO" id="GO:0008270">
    <property type="term" value="F:zinc ion binding"/>
    <property type="evidence" value="ECO:0007669"/>
    <property type="project" value="UniProtKB-UniRule"/>
</dbReference>
<dbReference type="GO" id="GO:0006730">
    <property type="term" value="P:one-carbon metabolic process"/>
    <property type="evidence" value="ECO:0007669"/>
    <property type="project" value="UniProtKB-UniRule"/>
</dbReference>
<dbReference type="GO" id="GO:0006729">
    <property type="term" value="P:tetrahydrobiopterin biosynthetic process"/>
    <property type="evidence" value="ECO:0007669"/>
    <property type="project" value="TreeGrafter"/>
</dbReference>
<dbReference type="GO" id="GO:0046654">
    <property type="term" value="P:tetrahydrofolate biosynthetic process"/>
    <property type="evidence" value="ECO:0007669"/>
    <property type="project" value="UniProtKB-UniRule"/>
</dbReference>
<dbReference type="FunFam" id="3.30.1130.10:FF:000001">
    <property type="entry name" value="GTP cyclohydrolase 1"/>
    <property type="match status" value="1"/>
</dbReference>
<dbReference type="Gene3D" id="1.10.286.10">
    <property type="match status" value="1"/>
</dbReference>
<dbReference type="Gene3D" id="3.30.1130.10">
    <property type="match status" value="1"/>
</dbReference>
<dbReference type="HAMAP" id="MF_00223">
    <property type="entry name" value="FolE"/>
    <property type="match status" value="1"/>
</dbReference>
<dbReference type="InterPro" id="IPR043133">
    <property type="entry name" value="GTP-CH-I_C/QueF"/>
</dbReference>
<dbReference type="InterPro" id="IPR043134">
    <property type="entry name" value="GTP-CH-I_N"/>
</dbReference>
<dbReference type="InterPro" id="IPR001474">
    <property type="entry name" value="GTP_CycHdrlase_I"/>
</dbReference>
<dbReference type="InterPro" id="IPR018234">
    <property type="entry name" value="GTP_CycHdrlase_I_CS"/>
</dbReference>
<dbReference type="InterPro" id="IPR020602">
    <property type="entry name" value="GTP_CycHdrlase_I_dom"/>
</dbReference>
<dbReference type="NCBIfam" id="TIGR00063">
    <property type="entry name" value="folE"/>
    <property type="match status" value="1"/>
</dbReference>
<dbReference type="NCBIfam" id="NF006825">
    <property type="entry name" value="PRK09347.1-2"/>
    <property type="match status" value="1"/>
</dbReference>
<dbReference type="NCBIfam" id="NF006826">
    <property type="entry name" value="PRK09347.1-3"/>
    <property type="match status" value="1"/>
</dbReference>
<dbReference type="PANTHER" id="PTHR11109:SF7">
    <property type="entry name" value="GTP CYCLOHYDROLASE 1"/>
    <property type="match status" value="1"/>
</dbReference>
<dbReference type="PANTHER" id="PTHR11109">
    <property type="entry name" value="GTP CYCLOHYDROLASE I"/>
    <property type="match status" value="1"/>
</dbReference>
<dbReference type="Pfam" id="PF01227">
    <property type="entry name" value="GTP_cyclohydroI"/>
    <property type="match status" value="1"/>
</dbReference>
<dbReference type="SUPFAM" id="SSF55620">
    <property type="entry name" value="Tetrahydrobiopterin biosynthesis enzymes-like"/>
    <property type="match status" value="1"/>
</dbReference>
<dbReference type="PROSITE" id="PS00859">
    <property type="entry name" value="GTP_CYCLOHYDROL_1_1"/>
    <property type="match status" value="1"/>
</dbReference>
<accession>Q15YG1</accession>
<feature type="chain" id="PRO_1000043717" description="GTP cyclohydrolase 1">
    <location>
        <begin position="1"/>
        <end position="184"/>
    </location>
</feature>
<feature type="binding site" evidence="2">
    <location>
        <position position="75"/>
    </location>
    <ligand>
        <name>Zn(2+)</name>
        <dbReference type="ChEBI" id="CHEBI:29105"/>
    </ligand>
</feature>
<feature type="binding site" evidence="2">
    <location>
        <position position="78"/>
    </location>
    <ligand>
        <name>Zn(2+)</name>
        <dbReference type="ChEBI" id="CHEBI:29105"/>
    </ligand>
</feature>
<feature type="binding site" evidence="2">
    <location>
        <position position="146"/>
    </location>
    <ligand>
        <name>Zn(2+)</name>
        <dbReference type="ChEBI" id="CHEBI:29105"/>
    </ligand>
</feature>